<organism>
    <name type="scientific">Listeria monocytogenes serovar 1/2a (strain ATCC BAA-679 / EGD-e)</name>
    <dbReference type="NCBI Taxonomy" id="169963"/>
    <lineage>
        <taxon>Bacteria</taxon>
        <taxon>Bacillati</taxon>
        <taxon>Bacillota</taxon>
        <taxon>Bacilli</taxon>
        <taxon>Bacillales</taxon>
        <taxon>Listeriaceae</taxon>
        <taxon>Listeria</taxon>
    </lineage>
</organism>
<keyword id="KW-0021">Allosteric enzyme</keyword>
<keyword id="KW-0067">ATP-binding</keyword>
<keyword id="KW-0963">Cytoplasm</keyword>
<keyword id="KW-0324">Glycolysis</keyword>
<keyword id="KW-0418">Kinase</keyword>
<keyword id="KW-0460">Magnesium</keyword>
<keyword id="KW-0479">Metal-binding</keyword>
<keyword id="KW-0547">Nucleotide-binding</keyword>
<keyword id="KW-1185">Reference proteome</keyword>
<keyword id="KW-0808">Transferase</keyword>
<feature type="chain" id="PRO_0000111962" description="ATP-dependent 6-phosphofructokinase">
    <location>
        <begin position="1"/>
        <end position="319"/>
    </location>
</feature>
<feature type="active site" description="Proton acceptor" evidence="1">
    <location>
        <position position="127"/>
    </location>
</feature>
<feature type="binding site" evidence="1">
    <location>
        <position position="11"/>
    </location>
    <ligand>
        <name>ATP</name>
        <dbReference type="ChEBI" id="CHEBI:30616"/>
    </ligand>
</feature>
<feature type="binding site" evidence="1">
    <location>
        <begin position="21"/>
        <end position="25"/>
    </location>
    <ligand>
        <name>ADP</name>
        <dbReference type="ChEBI" id="CHEBI:456216"/>
        <note>allosteric activator; ligand shared between dimeric partners</note>
    </ligand>
</feature>
<feature type="binding site" evidence="1">
    <location>
        <begin position="72"/>
        <end position="73"/>
    </location>
    <ligand>
        <name>ATP</name>
        <dbReference type="ChEBI" id="CHEBI:30616"/>
    </ligand>
</feature>
<feature type="binding site" evidence="1">
    <location>
        <begin position="102"/>
        <end position="105"/>
    </location>
    <ligand>
        <name>ATP</name>
        <dbReference type="ChEBI" id="CHEBI:30616"/>
    </ligand>
</feature>
<feature type="binding site" evidence="1">
    <location>
        <position position="103"/>
    </location>
    <ligand>
        <name>Mg(2+)</name>
        <dbReference type="ChEBI" id="CHEBI:18420"/>
        <note>catalytic</note>
    </ligand>
</feature>
<feature type="binding site" description="in other chain" evidence="1">
    <location>
        <begin position="125"/>
        <end position="127"/>
    </location>
    <ligand>
        <name>substrate</name>
        <note>ligand shared between dimeric partners</note>
    </ligand>
</feature>
<feature type="binding site" description="in other chain" evidence="1">
    <location>
        <position position="154"/>
    </location>
    <ligand>
        <name>ADP</name>
        <dbReference type="ChEBI" id="CHEBI:456216"/>
        <note>allosteric activator; ligand shared between dimeric partners</note>
    </ligand>
</feature>
<feature type="binding site" evidence="1">
    <location>
        <position position="162"/>
    </location>
    <ligand>
        <name>substrate</name>
        <note>ligand shared between dimeric partners</note>
    </ligand>
</feature>
<feature type="binding site" description="in other chain" evidence="1">
    <location>
        <begin position="169"/>
        <end position="171"/>
    </location>
    <ligand>
        <name>substrate</name>
        <note>ligand shared between dimeric partners</note>
    </ligand>
</feature>
<feature type="binding site" description="in other chain" evidence="1">
    <location>
        <begin position="185"/>
        <end position="187"/>
    </location>
    <ligand>
        <name>ADP</name>
        <dbReference type="ChEBI" id="CHEBI:456216"/>
        <note>allosteric activator; ligand shared between dimeric partners</note>
    </ligand>
</feature>
<feature type="binding site" description="in other chain" evidence="1">
    <location>
        <position position="211"/>
    </location>
    <ligand>
        <name>ADP</name>
        <dbReference type="ChEBI" id="CHEBI:456216"/>
        <note>allosteric activator; ligand shared between dimeric partners</note>
    </ligand>
</feature>
<feature type="binding site" description="in other chain" evidence="1">
    <location>
        <begin position="213"/>
        <end position="215"/>
    </location>
    <ligand>
        <name>ADP</name>
        <dbReference type="ChEBI" id="CHEBI:456216"/>
        <note>allosteric activator; ligand shared between dimeric partners</note>
    </ligand>
</feature>
<feature type="binding site" description="in other chain" evidence="1">
    <location>
        <position position="222"/>
    </location>
    <ligand>
        <name>substrate</name>
        <note>ligand shared between dimeric partners</note>
    </ligand>
</feature>
<feature type="binding site" evidence="1">
    <location>
        <position position="243"/>
    </location>
    <ligand>
        <name>substrate</name>
        <note>ligand shared between dimeric partners</note>
    </ligand>
</feature>
<feature type="binding site" description="in other chain" evidence="1">
    <location>
        <begin position="249"/>
        <end position="252"/>
    </location>
    <ligand>
        <name>substrate</name>
        <note>ligand shared between dimeric partners</note>
    </ligand>
</feature>
<accession>Q8Y6W0</accession>
<evidence type="ECO:0000255" key="1">
    <source>
        <dbReference type="HAMAP-Rule" id="MF_00339"/>
    </source>
</evidence>
<dbReference type="EC" id="2.7.1.11" evidence="1"/>
<dbReference type="EMBL" id="AL591979">
    <property type="protein sequence ID" value="CAC99649.1"/>
    <property type="molecule type" value="Genomic_DNA"/>
</dbReference>
<dbReference type="PIR" id="AC1271">
    <property type="entry name" value="AC1271"/>
</dbReference>
<dbReference type="RefSeq" id="NP_465096.1">
    <property type="nucleotide sequence ID" value="NC_003210.1"/>
</dbReference>
<dbReference type="RefSeq" id="WP_003723299.1">
    <property type="nucleotide sequence ID" value="NZ_CP149495.1"/>
</dbReference>
<dbReference type="SMR" id="Q8Y6W0"/>
<dbReference type="STRING" id="169963.gene:17594228"/>
<dbReference type="PaxDb" id="169963-lmo1571"/>
<dbReference type="EnsemblBacteria" id="CAC99649">
    <property type="protein sequence ID" value="CAC99649"/>
    <property type="gene ID" value="CAC99649"/>
</dbReference>
<dbReference type="GeneID" id="93239450"/>
<dbReference type="GeneID" id="986951"/>
<dbReference type="KEGG" id="lmo:lmo1571"/>
<dbReference type="PATRIC" id="fig|169963.11.peg.1612"/>
<dbReference type="eggNOG" id="COG0205">
    <property type="taxonomic scope" value="Bacteria"/>
</dbReference>
<dbReference type="HOGENOM" id="CLU_020655_0_1_9"/>
<dbReference type="OrthoDB" id="9802503at2"/>
<dbReference type="PhylomeDB" id="Q8Y6W0"/>
<dbReference type="BioCyc" id="LMON169963:LMO1571-MONOMER"/>
<dbReference type="UniPathway" id="UPA00109">
    <property type="reaction ID" value="UER00182"/>
</dbReference>
<dbReference type="Proteomes" id="UP000000817">
    <property type="component" value="Chromosome"/>
</dbReference>
<dbReference type="GO" id="GO:0005945">
    <property type="term" value="C:6-phosphofructokinase complex"/>
    <property type="evidence" value="ECO:0000318"/>
    <property type="project" value="GO_Central"/>
</dbReference>
<dbReference type="GO" id="GO:0003872">
    <property type="term" value="F:6-phosphofructokinase activity"/>
    <property type="evidence" value="ECO:0000318"/>
    <property type="project" value="GO_Central"/>
</dbReference>
<dbReference type="GO" id="GO:0005524">
    <property type="term" value="F:ATP binding"/>
    <property type="evidence" value="ECO:0007669"/>
    <property type="project" value="UniProtKB-KW"/>
</dbReference>
<dbReference type="GO" id="GO:0070095">
    <property type="term" value="F:fructose-6-phosphate binding"/>
    <property type="evidence" value="ECO:0000318"/>
    <property type="project" value="GO_Central"/>
</dbReference>
<dbReference type="GO" id="GO:0046872">
    <property type="term" value="F:metal ion binding"/>
    <property type="evidence" value="ECO:0007669"/>
    <property type="project" value="UniProtKB-KW"/>
</dbReference>
<dbReference type="GO" id="GO:0061621">
    <property type="term" value="P:canonical glycolysis"/>
    <property type="evidence" value="ECO:0000318"/>
    <property type="project" value="GO_Central"/>
</dbReference>
<dbReference type="GO" id="GO:0030388">
    <property type="term" value="P:fructose 1,6-bisphosphate metabolic process"/>
    <property type="evidence" value="ECO:0000318"/>
    <property type="project" value="GO_Central"/>
</dbReference>
<dbReference type="GO" id="GO:0006002">
    <property type="term" value="P:fructose 6-phosphate metabolic process"/>
    <property type="evidence" value="ECO:0000318"/>
    <property type="project" value="GO_Central"/>
</dbReference>
<dbReference type="CDD" id="cd00763">
    <property type="entry name" value="Bacterial_PFK"/>
    <property type="match status" value="1"/>
</dbReference>
<dbReference type="FunFam" id="3.40.50.450:FF:000001">
    <property type="entry name" value="ATP-dependent 6-phosphofructokinase"/>
    <property type="match status" value="1"/>
</dbReference>
<dbReference type="FunFam" id="3.40.50.460:FF:000002">
    <property type="entry name" value="ATP-dependent 6-phosphofructokinase"/>
    <property type="match status" value="1"/>
</dbReference>
<dbReference type="Gene3D" id="3.40.50.450">
    <property type="match status" value="1"/>
</dbReference>
<dbReference type="Gene3D" id="3.40.50.460">
    <property type="entry name" value="Phosphofructokinase domain"/>
    <property type="match status" value="1"/>
</dbReference>
<dbReference type="HAMAP" id="MF_00339">
    <property type="entry name" value="Phosphofructokinase_I_B1"/>
    <property type="match status" value="1"/>
</dbReference>
<dbReference type="InterPro" id="IPR022953">
    <property type="entry name" value="ATP_PFK"/>
</dbReference>
<dbReference type="InterPro" id="IPR012003">
    <property type="entry name" value="ATP_PFK_prok-type"/>
</dbReference>
<dbReference type="InterPro" id="IPR012828">
    <property type="entry name" value="PFKA_ATP_prok"/>
</dbReference>
<dbReference type="InterPro" id="IPR015912">
    <property type="entry name" value="Phosphofructokinase_CS"/>
</dbReference>
<dbReference type="InterPro" id="IPR000023">
    <property type="entry name" value="Phosphofructokinase_dom"/>
</dbReference>
<dbReference type="InterPro" id="IPR035966">
    <property type="entry name" value="PKF_sf"/>
</dbReference>
<dbReference type="NCBIfam" id="TIGR02482">
    <property type="entry name" value="PFKA_ATP"/>
    <property type="match status" value="1"/>
</dbReference>
<dbReference type="NCBIfam" id="NF002872">
    <property type="entry name" value="PRK03202.1"/>
    <property type="match status" value="1"/>
</dbReference>
<dbReference type="PANTHER" id="PTHR13697:SF4">
    <property type="entry name" value="ATP-DEPENDENT 6-PHOSPHOFRUCTOKINASE"/>
    <property type="match status" value="1"/>
</dbReference>
<dbReference type="PANTHER" id="PTHR13697">
    <property type="entry name" value="PHOSPHOFRUCTOKINASE"/>
    <property type="match status" value="1"/>
</dbReference>
<dbReference type="Pfam" id="PF00365">
    <property type="entry name" value="PFK"/>
    <property type="match status" value="1"/>
</dbReference>
<dbReference type="PIRSF" id="PIRSF000532">
    <property type="entry name" value="ATP_PFK_prok"/>
    <property type="match status" value="1"/>
</dbReference>
<dbReference type="PRINTS" id="PR00476">
    <property type="entry name" value="PHFRCTKINASE"/>
</dbReference>
<dbReference type="SUPFAM" id="SSF53784">
    <property type="entry name" value="Phosphofructokinase"/>
    <property type="match status" value="1"/>
</dbReference>
<dbReference type="PROSITE" id="PS00433">
    <property type="entry name" value="PHOSPHOFRUCTOKINASE"/>
    <property type="match status" value="1"/>
</dbReference>
<protein>
    <recommendedName>
        <fullName evidence="1">ATP-dependent 6-phosphofructokinase</fullName>
        <shortName evidence="1">ATP-PFK</shortName>
        <shortName evidence="1">Phosphofructokinase</shortName>
        <ecNumber evidence="1">2.7.1.11</ecNumber>
    </recommendedName>
    <alternativeName>
        <fullName evidence="1">Phosphohexokinase</fullName>
    </alternativeName>
</protein>
<name>PFKA_LISMO</name>
<proteinExistence type="inferred from homology"/>
<reference key="1">
    <citation type="journal article" date="2001" name="Science">
        <title>Comparative genomics of Listeria species.</title>
        <authorList>
            <person name="Glaser P."/>
            <person name="Frangeul L."/>
            <person name="Buchrieser C."/>
            <person name="Rusniok C."/>
            <person name="Amend A."/>
            <person name="Baquero F."/>
            <person name="Berche P."/>
            <person name="Bloecker H."/>
            <person name="Brandt P."/>
            <person name="Chakraborty T."/>
            <person name="Charbit A."/>
            <person name="Chetouani F."/>
            <person name="Couve E."/>
            <person name="de Daruvar A."/>
            <person name="Dehoux P."/>
            <person name="Domann E."/>
            <person name="Dominguez-Bernal G."/>
            <person name="Duchaud E."/>
            <person name="Durant L."/>
            <person name="Dussurget O."/>
            <person name="Entian K.-D."/>
            <person name="Fsihi H."/>
            <person name="Garcia-del Portillo F."/>
            <person name="Garrido P."/>
            <person name="Gautier L."/>
            <person name="Goebel W."/>
            <person name="Gomez-Lopez N."/>
            <person name="Hain T."/>
            <person name="Hauf J."/>
            <person name="Jackson D."/>
            <person name="Jones L.-M."/>
            <person name="Kaerst U."/>
            <person name="Kreft J."/>
            <person name="Kuhn M."/>
            <person name="Kunst F."/>
            <person name="Kurapkat G."/>
            <person name="Madueno E."/>
            <person name="Maitournam A."/>
            <person name="Mata Vicente J."/>
            <person name="Ng E."/>
            <person name="Nedjari H."/>
            <person name="Nordsiek G."/>
            <person name="Novella S."/>
            <person name="de Pablos B."/>
            <person name="Perez-Diaz J.-C."/>
            <person name="Purcell R."/>
            <person name="Remmel B."/>
            <person name="Rose M."/>
            <person name="Schlueter T."/>
            <person name="Simoes N."/>
            <person name="Tierrez A."/>
            <person name="Vazquez-Boland J.-A."/>
            <person name="Voss H."/>
            <person name="Wehland J."/>
            <person name="Cossart P."/>
        </authorList>
    </citation>
    <scope>NUCLEOTIDE SEQUENCE [LARGE SCALE GENOMIC DNA]</scope>
    <source>
        <strain>ATCC BAA-679 / EGD-e</strain>
    </source>
</reference>
<comment type="function">
    <text evidence="1">Catalyzes the phosphorylation of D-fructose 6-phosphate to fructose 1,6-bisphosphate by ATP, the first committing step of glycolysis.</text>
</comment>
<comment type="catalytic activity">
    <reaction evidence="1">
        <text>beta-D-fructose 6-phosphate + ATP = beta-D-fructose 1,6-bisphosphate + ADP + H(+)</text>
        <dbReference type="Rhea" id="RHEA:16109"/>
        <dbReference type="ChEBI" id="CHEBI:15378"/>
        <dbReference type="ChEBI" id="CHEBI:30616"/>
        <dbReference type="ChEBI" id="CHEBI:32966"/>
        <dbReference type="ChEBI" id="CHEBI:57634"/>
        <dbReference type="ChEBI" id="CHEBI:456216"/>
        <dbReference type="EC" id="2.7.1.11"/>
    </reaction>
</comment>
<comment type="cofactor">
    <cofactor evidence="1">
        <name>Mg(2+)</name>
        <dbReference type="ChEBI" id="CHEBI:18420"/>
    </cofactor>
</comment>
<comment type="activity regulation">
    <text evidence="1">Allosterically activated by ADP and other diphosphonucleosides, and allosterically inhibited by phosphoenolpyruvate.</text>
</comment>
<comment type="pathway">
    <text evidence="1">Carbohydrate degradation; glycolysis; D-glyceraldehyde 3-phosphate and glycerone phosphate from D-glucose: step 3/4.</text>
</comment>
<comment type="subunit">
    <text evidence="1">Homotetramer.</text>
</comment>
<comment type="subcellular location">
    <subcellularLocation>
        <location evidence="1">Cytoplasm</location>
    </subcellularLocation>
</comment>
<comment type="similarity">
    <text evidence="1">Belongs to the phosphofructokinase type A (PFKA) family. ATP-dependent PFK group I subfamily. Prokaryotic clade 'B1' sub-subfamily.</text>
</comment>
<gene>
    <name evidence="1" type="primary">pfkA</name>
    <name type="synonym">pfk</name>
    <name type="ordered locus">lmo1571</name>
</gene>
<sequence>MKRIAILTSGGDAPGMNAATRAVVRKAIYEGLEVYGINYGFLGLVNGDIRKLELGSVGDLLHRGGTFLYSARYPEFATEEGQLKGIEQLKKHQIDGLVVIGGDGSYHGAEALTKRGFPTIGIPGTIDNDISGTDFTIGFDTALNTVLDALDKIRDTATSHERTFIIEVMGRDAGDIALWSGLAGGAEAIIVPEESFNMDDVVDRLNKGRERGKKHSIIVVAEGVMSGNEFAKQLAEYGDYHARVTVLGHVQRGGSPTAFDRVLASRLGARSVELLLENRGGLAVGIRENRIVENDISEILKEKHTLDQKLFDLASILSI</sequence>